<feature type="chain" id="PRO_0000164273" description="UPF0346 protein LBA0976">
    <location>
        <begin position="1"/>
        <end position="76"/>
    </location>
</feature>
<accession>Q5FKE7</accession>
<comment type="similarity">
    <text evidence="1">Belongs to the UPF0346 family.</text>
</comment>
<sequence length="76" mass="9211">MAYRESFYRYLMTQRDADSSDEVAQFANNAQHDLTFPKQEQDYEELSDYLELNASYLPSMSVFDRAYKMYEEKMMY</sequence>
<dbReference type="EMBL" id="CP000033">
    <property type="protein sequence ID" value="AAV42827.1"/>
    <property type="molecule type" value="Genomic_DNA"/>
</dbReference>
<dbReference type="RefSeq" id="WP_003547128.1">
    <property type="nucleotide sequence ID" value="NC_006814.3"/>
</dbReference>
<dbReference type="RefSeq" id="YP_193858.1">
    <property type="nucleotide sequence ID" value="NC_006814.3"/>
</dbReference>
<dbReference type="SMR" id="Q5FKE7"/>
<dbReference type="STRING" id="272621.LBA0976"/>
<dbReference type="KEGG" id="lac:LBA0976"/>
<dbReference type="PATRIC" id="fig|272621.13.peg.927"/>
<dbReference type="eggNOG" id="COG4479">
    <property type="taxonomic scope" value="Bacteria"/>
</dbReference>
<dbReference type="HOGENOM" id="CLU_177534_1_0_9"/>
<dbReference type="OrthoDB" id="2242851at2"/>
<dbReference type="BioCyc" id="LACI272621:G1G49-977-MONOMER"/>
<dbReference type="Proteomes" id="UP000006381">
    <property type="component" value="Chromosome"/>
</dbReference>
<dbReference type="Gene3D" id="1.10.150.260">
    <property type="entry name" value="YozE SAM-like"/>
    <property type="match status" value="1"/>
</dbReference>
<dbReference type="HAMAP" id="MF_01538">
    <property type="entry name" value="UPF0346"/>
    <property type="match status" value="1"/>
</dbReference>
<dbReference type="InterPro" id="IPR010673">
    <property type="entry name" value="UPF0346"/>
</dbReference>
<dbReference type="InterPro" id="IPR023089">
    <property type="entry name" value="YozE_SAM-like"/>
</dbReference>
<dbReference type="InterPro" id="IPR036806">
    <property type="entry name" value="YozE_SAM-like_sf"/>
</dbReference>
<dbReference type="NCBIfam" id="NF010193">
    <property type="entry name" value="PRK13672.1"/>
    <property type="match status" value="1"/>
</dbReference>
<dbReference type="Pfam" id="PF06855">
    <property type="entry name" value="YozE_SAM_like"/>
    <property type="match status" value="1"/>
</dbReference>
<dbReference type="PIRSF" id="PIRSF037262">
    <property type="entry name" value="UCP037262"/>
    <property type="match status" value="1"/>
</dbReference>
<dbReference type="SUPFAM" id="SSF140652">
    <property type="entry name" value="YozE-like"/>
    <property type="match status" value="1"/>
</dbReference>
<protein>
    <recommendedName>
        <fullName evidence="1">UPF0346 protein LBA0976</fullName>
    </recommendedName>
</protein>
<evidence type="ECO:0000255" key="1">
    <source>
        <dbReference type="HAMAP-Rule" id="MF_01538"/>
    </source>
</evidence>
<proteinExistence type="inferred from homology"/>
<keyword id="KW-1185">Reference proteome</keyword>
<name>Y976_LACAC</name>
<reference key="1">
    <citation type="journal article" date="2005" name="Proc. Natl. Acad. Sci. U.S.A.">
        <title>Complete genome sequence of the probiotic lactic acid bacterium Lactobacillus acidophilus NCFM.</title>
        <authorList>
            <person name="Altermann E."/>
            <person name="Russell W.M."/>
            <person name="Azcarate-Peril M.A."/>
            <person name="Barrangou R."/>
            <person name="Buck B.L."/>
            <person name="McAuliffe O."/>
            <person name="Souther N."/>
            <person name="Dobson A."/>
            <person name="Duong T."/>
            <person name="Callanan M."/>
            <person name="Lick S."/>
            <person name="Hamrick A."/>
            <person name="Cano R."/>
            <person name="Klaenhammer T.R."/>
        </authorList>
    </citation>
    <scope>NUCLEOTIDE SEQUENCE [LARGE SCALE GENOMIC DNA]</scope>
    <source>
        <strain>ATCC 700396 / NCK56 / N2 / NCFM</strain>
    </source>
</reference>
<organism>
    <name type="scientific">Lactobacillus acidophilus (strain ATCC 700396 / NCK56 / N2 / NCFM)</name>
    <dbReference type="NCBI Taxonomy" id="272621"/>
    <lineage>
        <taxon>Bacteria</taxon>
        <taxon>Bacillati</taxon>
        <taxon>Bacillota</taxon>
        <taxon>Bacilli</taxon>
        <taxon>Lactobacillales</taxon>
        <taxon>Lactobacillaceae</taxon>
        <taxon>Lactobacillus</taxon>
    </lineage>
</organism>
<gene>
    <name type="ordered locus">LBA0976</name>
</gene>